<keyword id="KW-0963">Cytoplasm</keyword>
<keyword id="KW-0488">Methylation</keyword>
<keyword id="KW-0648">Protein biosynthesis</keyword>
<reference key="1">
    <citation type="journal article" date="2009" name="J. Bacteriol.">
        <title>Role of conjugative elements in the evolution of the multidrug-resistant pandemic clone Streptococcus pneumoniae Spain23F ST81.</title>
        <authorList>
            <person name="Croucher N.J."/>
            <person name="Walker D."/>
            <person name="Romero P."/>
            <person name="Lennard N."/>
            <person name="Paterson G.K."/>
            <person name="Bason N.C."/>
            <person name="Mitchell A.M."/>
            <person name="Quail M.A."/>
            <person name="Andrew P.W."/>
            <person name="Parkhill J."/>
            <person name="Bentley S.D."/>
            <person name="Mitchell T.J."/>
        </authorList>
    </citation>
    <scope>NUCLEOTIDE SEQUENCE [LARGE SCALE GENOMIC DNA]</scope>
    <source>
        <strain>ATCC 700669 / Spain 23F-1</strain>
    </source>
</reference>
<protein>
    <recommendedName>
        <fullName evidence="1">Peptide chain release factor 1</fullName>
        <shortName evidence="1">RF-1</shortName>
    </recommendedName>
</protein>
<comment type="function">
    <text evidence="1">Peptide chain release factor 1 directs the termination of translation in response to the peptide chain termination codons UAG and UAA.</text>
</comment>
<comment type="subcellular location">
    <subcellularLocation>
        <location evidence="1">Cytoplasm</location>
    </subcellularLocation>
</comment>
<comment type="PTM">
    <text evidence="1">Methylated by PrmC. Methylation increases the termination efficiency of RF1.</text>
</comment>
<comment type="similarity">
    <text evidence="1">Belongs to the prokaryotic/mitochondrial release factor family.</text>
</comment>
<accession>B8ZPH1</accession>
<sequence length="359" mass="40630">MNIYDQLQAVEDRYEELGELLSDPDVVSDTKRFMELSKEEASNRDTVIAYREYKQVLQNIVDAEEMIKESGGDADLEEMAKQELKDAKAEKEEYEEKLKILLLPKDPNDDKNIILEIRGAAGGDEAALFAGDLLTMYQKYAEAQGWRFEVMEASMNGVGGFKEVVAMVSGQSVYSKLKYESGAHRVQRVPVTESQGRVHTSTATVLVMPEVEEVEYDIDPKDLRVDIYHASGAGGQNVNKVATAVRIVHLPTNIKVEMQEERTQQKNREKAMKIIRARVADHFAQIAQDEQDAERKSTIGTGDRSERIRTYNFPQNRVTDHRIGLTLQKLDTILSGKLDEVVDALVLYDQTQKLEELNK</sequence>
<evidence type="ECO:0000255" key="1">
    <source>
        <dbReference type="HAMAP-Rule" id="MF_00093"/>
    </source>
</evidence>
<name>RF1_STRPJ</name>
<proteinExistence type="inferred from homology"/>
<gene>
    <name evidence="1" type="primary">prfA</name>
    <name type="ordered locus">SPN23F09430</name>
</gene>
<feature type="chain" id="PRO_1000193507" description="Peptide chain release factor 1">
    <location>
        <begin position="1"/>
        <end position="359"/>
    </location>
</feature>
<feature type="modified residue" description="N5-methylglutamine" evidence="1">
    <location>
        <position position="236"/>
    </location>
</feature>
<organism>
    <name type="scientific">Streptococcus pneumoniae (strain ATCC 700669 / Spain 23F-1)</name>
    <dbReference type="NCBI Taxonomy" id="561276"/>
    <lineage>
        <taxon>Bacteria</taxon>
        <taxon>Bacillati</taxon>
        <taxon>Bacillota</taxon>
        <taxon>Bacilli</taxon>
        <taxon>Lactobacillales</taxon>
        <taxon>Streptococcaceae</taxon>
        <taxon>Streptococcus</taxon>
    </lineage>
</organism>
<dbReference type="EMBL" id="FM211187">
    <property type="protein sequence ID" value="CAR68768.1"/>
    <property type="molecule type" value="Genomic_DNA"/>
</dbReference>
<dbReference type="RefSeq" id="WP_001028801.1">
    <property type="nucleotide sequence ID" value="NC_011900.1"/>
</dbReference>
<dbReference type="SMR" id="B8ZPH1"/>
<dbReference type="GeneID" id="45653642"/>
<dbReference type="KEGG" id="sne:SPN23F09430"/>
<dbReference type="HOGENOM" id="CLU_036856_0_1_9"/>
<dbReference type="GO" id="GO:0005737">
    <property type="term" value="C:cytoplasm"/>
    <property type="evidence" value="ECO:0007669"/>
    <property type="project" value="UniProtKB-SubCell"/>
</dbReference>
<dbReference type="GO" id="GO:0016149">
    <property type="term" value="F:translation release factor activity, codon specific"/>
    <property type="evidence" value="ECO:0007669"/>
    <property type="project" value="UniProtKB-UniRule"/>
</dbReference>
<dbReference type="FunFam" id="3.30.160.20:FF:000027">
    <property type="entry name" value="Peptide chain release factor 1"/>
    <property type="match status" value="1"/>
</dbReference>
<dbReference type="FunFam" id="3.30.70.1660:FF:000002">
    <property type="entry name" value="Peptide chain release factor 1"/>
    <property type="match status" value="1"/>
</dbReference>
<dbReference type="FunFam" id="3.30.70.1660:FF:000004">
    <property type="entry name" value="Peptide chain release factor 1"/>
    <property type="match status" value="1"/>
</dbReference>
<dbReference type="Gene3D" id="3.30.160.20">
    <property type="match status" value="1"/>
</dbReference>
<dbReference type="Gene3D" id="3.30.70.1660">
    <property type="match status" value="2"/>
</dbReference>
<dbReference type="Gene3D" id="6.10.140.1950">
    <property type="match status" value="1"/>
</dbReference>
<dbReference type="HAMAP" id="MF_00093">
    <property type="entry name" value="Rel_fac_1"/>
    <property type="match status" value="1"/>
</dbReference>
<dbReference type="InterPro" id="IPR005139">
    <property type="entry name" value="PCRF"/>
</dbReference>
<dbReference type="InterPro" id="IPR000352">
    <property type="entry name" value="Pep_chain_release_fac_I"/>
</dbReference>
<dbReference type="InterPro" id="IPR045853">
    <property type="entry name" value="Pep_chain_release_fac_I_sf"/>
</dbReference>
<dbReference type="InterPro" id="IPR050057">
    <property type="entry name" value="Prokaryotic/Mito_RF"/>
</dbReference>
<dbReference type="InterPro" id="IPR004373">
    <property type="entry name" value="RF-1"/>
</dbReference>
<dbReference type="NCBIfam" id="TIGR00019">
    <property type="entry name" value="prfA"/>
    <property type="match status" value="1"/>
</dbReference>
<dbReference type="NCBIfam" id="NF001859">
    <property type="entry name" value="PRK00591.1"/>
    <property type="match status" value="1"/>
</dbReference>
<dbReference type="PANTHER" id="PTHR43804">
    <property type="entry name" value="LD18447P"/>
    <property type="match status" value="1"/>
</dbReference>
<dbReference type="PANTHER" id="PTHR43804:SF7">
    <property type="entry name" value="LD18447P"/>
    <property type="match status" value="1"/>
</dbReference>
<dbReference type="Pfam" id="PF03462">
    <property type="entry name" value="PCRF"/>
    <property type="match status" value="1"/>
</dbReference>
<dbReference type="Pfam" id="PF00472">
    <property type="entry name" value="RF-1"/>
    <property type="match status" value="1"/>
</dbReference>
<dbReference type="SMART" id="SM00937">
    <property type="entry name" value="PCRF"/>
    <property type="match status" value="1"/>
</dbReference>
<dbReference type="SUPFAM" id="SSF75620">
    <property type="entry name" value="Release factor"/>
    <property type="match status" value="1"/>
</dbReference>
<dbReference type="PROSITE" id="PS00745">
    <property type="entry name" value="RF_PROK_I"/>
    <property type="match status" value="1"/>
</dbReference>